<proteinExistence type="evidence at transcript level"/>
<evidence type="ECO:0000250" key="1">
    <source>
        <dbReference type="UniProtKB" id="Q91XD8"/>
    </source>
</evidence>
<evidence type="ECO:0000250" key="2">
    <source>
        <dbReference type="UniProtKB" id="Q96DW6"/>
    </source>
</evidence>
<evidence type="ECO:0000255" key="3">
    <source>
        <dbReference type="HAMAP-Rule" id="MF_03064"/>
    </source>
</evidence>
<evidence type="ECO:0000269" key="4">
    <source>
    </source>
</evidence>
<evidence type="ECO:0000269" key="5">
    <source>
    </source>
</evidence>
<evidence type="ECO:0000305" key="6"/>
<comment type="function">
    <text evidence="3">Mitochondrial glycine transporter that imports glycine into the mitochondrial matrix. Plays an important role in providing glycine for the first enzymatic step in heme biosynthesis, the condensation of glycine with succinyl-CoA to produce 5-aminolevulinate (ALA) in the mitochondrial matrix. Required during erythropoiesis.</text>
</comment>
<comment type="function">
    <text evidence="1">May play a role as pro-apoptotic protein that induces caspase-dependent apoptosis.</text>
</comment>
<comment type="catalytic activity">
    <reaction evidence="2">
        <text>glycine(in) = glycine(out)</text>
        <dbReference type="Rhea" id="RHEA:70715"/>
        <dbReference type="ChEBI" id="CHEBI:57305"/>
    </reaction>
</comment>
<comment type="subcellular location">
    <subcellularLocation>
        <location evidence="3">Mitochondrion inner membrane</location>
        <topology evidence="3">Multi-pass membrane protein</topology>
    </subcellularLocation>
</comment>
<comment type="tissue specificity">
    <text evidence="5">At 24 hours post-fertilization, expressed predominantly in posterior blood island, posterior cardinal vein and circulating blood, as well as in somites, brain and retina. At 34 hours post-fertilization, becomes restricted to posterior blood island and circulating blood.</text>
</comment>
<comment type="disruption phenotype">
    <text evidence="4">Fishes lacking both slc25a38a and slc25a38b display anemia.</text>
</comment>
<comment type="similarity">
    <text evidence="3">Belongs to the mitochondrial carrier (TC 2.A.29) family. SLC25A38 subfamily.</text>
</comment>
<protein>
    <recommendedName>
        <fullName evidence="3">Mitochondrial glycine transporter A</fullName>
    </recommendedName>
    <alternativeName>
        <fullName evidence="3">Solute carrier family 25 member 38-A</fullName>
    </alternativeName>
</protein>
<keyword id="KW-0472">Membrane</keyword>
<keyword id="KW-0496">Mitochondrion</keyword>
<keyword id="KW-0999">Mitochondrion inner membrane</keyword>
<keyword id="KW-1185">Reference proteome</keyword>
<keyword id="KW-0677">Repeat</keyword>
<keyword id="KW-0812">Transmembrane</keyword>
<keyword id="KW-1133">Transmembrane helix</keyword>
<keyword id="KW-0813">Transport</keyword>
<organism>
    <name type="scientific">Danio rerio</name>
    <name type="common">Zebrafish</name>
    <name type="synonym">Brachydanio rerio</name>
    <dbReference type="NCBI Taxonomy" id="7955"/>
    <lineage>
        <taxon>Eukaryota</taxon>
        <taxon>Metazoa</taxon>
        <taxon>Chordata</taxon>
        <taxon>Craniata</taxon>
        <taxon>Vertebrata</taxon>
        <taxon>Euteleostomi</taxon>
        <taxon>Actinopterygii</taxon>
        <taxon>Neopterygii</taxon>
        <taxon>Teleostei</taxon>
        <taxon>Ostariophysi</taxon>
        <taxon>Cypriniformes</taxon>
        <taxon>Danionidae</taxon>
        <taxon>Danioninae</taxon>
        <taxon>Danio</taxon>
    </lineage>
</organism>
<reference key="1">
    <citation type="journal article" date="2013" name="Nature">
        <title>The zebrafish reference genome sequence and its relationship to the human genome.</title>
        <authorList>
            <person name="Howe K."/>
            <person name="Clark M.D."/>
            <person name="Torroja C.F."/>
            <person name="Torrance J."/>
            <person name="Berthelot C."/>
            <person name="Muffato M."/>
            <person name="Collins J.E."/>
            <person name="Humphray S."/>
            <person name="McLaren K."/>
            <person name="Matthews L."/>
            <person name="McLaren S."/>
            <person name="Sealy I."/>
            <person name="Caccamo M."/>
            <person name="Churcher C."/>
            <person name="Scott C."/>
            <person name="Barrett J.C."/>
            <person name="Koch R."/>
            <person name="Rauch G.J."/>
            <person name="White S."/>
            <person name="Chow W."/>
            <person name="Kilian B."/>
            <person name="Quintais L.T."/>
            <person name="Guerra-Assuncao J.A."/>
            <person name="Zhou Y."/>
            <person name="Gu Y."/>
            <person name="Yen J."/>
            <person name="Vogel J.H."/>
            <person name="Eyre T."/>
            <person name="Redmond S."/>
            <person name="Banerjee R."/>
            <person name="Chi J."/>
            <person name="Fu B."/>
            <person name="Langley E."/>
            <person name="Maguire S.F."/>
            <person name="Laird G.K."/>
            <person name="Lloyd D."/>
            <person name="Kenyon E."/>
            <person name="Donaldson S."/>
            <person name="Sehra H."/>
            <person name="Almeida-King J."/>
            <person name="Loveland J."/>
            <person name="Trevanion S."/>
            <person name="Jones M."/>
            <person name="Quail M."/>
            <person name="Willey D."/>
            <person name="Hunt A."/>
            <person name="Burton J."/>
            <person name="Sims S."/>
            <person name="McLay K."/>
            <person name="Plumb B."/>
            <person name="Davis J."/>
            <person name="Clee C."/>
            <person name="Oliver K."/>
            <person name="Clark R."/>
            <person name="Riddle C."/>
            <person name="Elliot D."/>
            <person name="Threadgold G."/>
            <person name="Harden G."/>
            <person name="Ware D."/>
            <person name="Begum S."/>
            <person name="Mortimore B."/>
            <person name="Kerry G."/>
            <person name="Heath P."/>
            <person name="Phillimore B."/>
            <person name="Tracey A."/>
            <person name="Corby N."/>
            <person name="Dunn M."/>
            <person name="Johnson C."/>
            <person name="Wood J."/>
            <person name="Clark S."/>
            <person name="Pelan S."/>
            <person name="Griffiths G."/>
            <person name="Smith M."/>
            <person name="Glithero R."/>
            <person name="Howden P."/>
            <person name="Barker N."/>
            <person name="Lloyd C."/>
            <person name="Stevens C."/>
            <person name="Harley J."/>
            <person name="Holt K."/>
            <person name="Panagiotidis G."/>
            <person name="Lovell J."/>
            <person name="Beasley H."/>
            <person name="Henderson C."/>
            <person name="Gordon D."/>
            <person name="Auger K."/>
            <person name="Wright D."/>
            <person name="Collins J."/>
            <person name="Raisen C."/>
            <person name="Dyer L."/>
            <person name="Leung K."/>
            <person name="Robertson L."/>
            <person name="Ambridge K."/>
            <person name="Leongamornlert D."/>
            <person name="McGuire S."/>
            <person name="Gilderthorp R."/>
            <person name="Griffiths C."/>
            <person name="Manthravadi D."/>
            <person name="Nichol S."/>
            <person name="Barker G."/>
            <person name="Whitehead S."/>
            <person name="Kay M."/>
            <person name="Brown J."/>
            <person name="Murnane C."/>
            <person name="Gray E."/>
            <person name="Humphries M."/>
            <person name="Sycamore N."/>
            <person name="Barker D."/>
            <person name="Saunders D."/>
            <person name="Wallis J."/>
            <person name="Babbage A."/>
            <person name="Hammond S."/>
            <person name="Mashreghi-Mohammadi M."/>
            <person name="Barr L."/>
            <person name="Martin S."/>
            <person name="Wray P."/>
            <person name="Ellington A."/>
            <person name="Matthews N."/>
            <person name="Ellwood M."/>
            <person name="Woodmansey R."/>
            <person name="Clark G."/>
            <person name="Cooper J."/>
            <person name="Tromans A."/>
            <person name="Grafham D."/>
            <person name="Skuce C."/>
            <person name="Pandian R."/>
            <person name="Andrews R."/>
            <person name="Harrison E."/>
            <person name="Kimberley A."/>
            <person name="Garnett J."/>
            <person name="Fosker N."/>
            <person name="Hall R."/>
            <person name="Garner P."/>
            <person name="Kelly D."/>
            <person name="Bird C."/>
            <person name="Palmer S."/>
            <person name="Gehring I."/>
            <person name="Berger A."/>
            <person name="Dooley C.M."/>
            <person name="Ersan-Urun Z."/>
            <person name="Eser C."/>
            <person name="Geiger H."/>
            <person name="Geisler M."/>
            <person name="Karotki L."/>
            <person name="Kirn A."/>
            <person name="Konantz J."/>
            <person name="Konantz M."/>
            <person name="Oberlander M."/>
            <person name="Rudolph-Geiger S."/>
            <person name="Teucke M."/>
            <person name="Lanz C."/>
            <person name="Raddatz G."/>
            <person name="Osoegawa K."/>
            <person name="Zhu B."/>
            <person name="Rapp A."/>
            <person name="Widaa S."/>
            <person name="Langford C."/>
            <person name="Yang F."/>
            <person name="Schuster S.C."/>
            <person name="Carter N.P."/>
            <person name="Harrow J."/>
            <person name="Ning Z."/>
            <person name="Herrero J."/>
            <person name="Searle S.M."/>
            <person name="Enright A."/>
            <person name="Geisler R."/>
            <person name="Plasterk R.H."/>
            <person name="Lee C."/>
            <person name="Westerfield M."/>
            <person name="de Jong P.J."/>
            <person name="Zon L.I."/>
            <person name="Postlethwait J.H."/>
            <person name="Nusslein-Volhard C."/>
            <person name="Hubbard T.J."/>
            <person name="Roest Crollius H."/>
            <person name="Rogers J."/>
            <person name="Stemple D.L."/>
        </authorList>
    </citation>
    <scope>NUCLEOTIDE SEQUENCE [LARGE SCALE GENOMIC DNA]</scope>
    <source>
        <strain>Tuebingen</strain>
    </source>
</reference>
<reference key="2">
    <citation type="submission" date="2006-09" db="EMBL/GenBank/DDBJ databases">
        <authorList>
            <consortium name="NIH - Zebrafish Gene Collection (ZGC) project"/>
        </authorList>
    </citation>
    <scope>NUCLEOTIDE SEQUENCE [LARGE SCALE MRNA]</scope>
    <source>
        <tissue>Intestine</tissue>
    </source>
</reference>
<reference key="3">
    <citation type="journal article" date="2009" name="Nat. Genet.">
        <title>Mutations in mitochondrial carrier family gene SLC25A38 cause nonsyndromic autosomal recessive congenital sideroblastic anemia.</title>
        <authorList>
            <person name="Guernsey D.L."/>
            <person name="Jiang H."/>
            <person name="Campagna D.R."/>
            <person name="Evans S.C."/>
            <person name="Ferguson M."/>
            <person name="Kellogg M.D."/>
            <person name="Lachance M."/>
            <person name="Matsuoka M."/>
            <person name="Nightingale M."/>
            <person name="Rideout A."/>
            <person name="Saint-Amant L."/>
            <person name="Schmidt P.J."/>
            <person name="Orr A."/>
            <person name="Bottomley S.S."/>
            <person name="Fleming M.D."/>
            <person name="Ludman M."/>
            <person name="Dyack S."/>
            <person name="Fernandez C.V."/>
            <person name="Samuels M.E."/>
        </authorList>
    </citation>
    <scope>DISRUPTION PHENOTYPE</scope>
</reference>
<reference key="4">
    <citation type="journal article" date="2016" name="PLoS Genet.">
        <title>Glycine and folate ameliorate models of congenital sideroblastic anemia.</title>
        <authorList>
            <person name="Fernandez-Murray J.P."/>
            <person name="Prykhozhij S.V."/>
            <person name="Dufay J.N."/>
            <person name="Steele S.L."/>
            <person name="Gaston D."/>
            <person name="Nasrallah G.K."/>
            <person name="Coombs A.J."/>
            <person name="Liwski R.S."/>
            <person name="Fernandez C.V."/>
            <person name="Berman J.N."/>
            <person name="McMaster C.R."/>
        </authorList>
    </citation>
    <scope>TISSUE SPECIFICITY</scope>
</reference>
<name>S238A_DANRE</name>
<sequence length="287" mass="31161">MEFSVAHPAVKAFMCGSLSGTCSTLLFQPLDLVKTRLQTLQSGVQPGTGRVGMVTVFVNVLRTEKLLGLWRGVSPSFVRCIPGVGIYFSTYFTLKQRYFSSGAPGPLQAVLLGAGARCVAGVFMLPVTVIKTRFESGRYRYSGVFGALRSVCQTEGPKALFSGLMATLLRDAPFSGIYVMIYSQTKHLLPPEISQSSYAPVANFSCGVLAGVLASVLTQPADVVKTHIQVSPDVFSRTSDVVRYIYKEHGLVGFFRGAVPRSLRRTMMAAMAWTVYEQLMAQIGLKS</sequence>
<dbReference type="EMBL" id="CABZ01034848">
    <property type="status" value="NOT_ANNOTATED_CDS"/>
    <property type="molecule type" value="Genomic_DNA"/>
</dbReference>
<dbReference type="EMBL" id="CABZ01034849">
    <property type="status" value="NOT_ANNOTATED_CDS"/>
    <property type="molecule type" value="Genomic_DNA"/>
</dbReference>
<dbReference type="EMBL" id="BC124222">
    <property type="protein sequence ID" value="AAI24223.1"/>
    <property type="molecule type" value="mRNA"/>
</dbReference>
<dbReference type="RefSeq" id="NP_001070070.1">
    <property type="nucleotide sequence ID" value="NM_001076602.1"/>
</dbReference>
<dbReference type="SMR" id="Q08CI8"/>
<dbReference type="FunCoup" id="Q08CI8">
    <property type="interactions" value="1102"/>
</dbReference>
<dbReference type="STRING" id="7955.ENSDARP00000077967"/>
<dbReference type="PaxDb" id="7955-ENSDARP00000077967"/>
<dbReference type="Ensembl" id="ENSDART00000083532">
    <property type="protein sequence ID" value="ENSDARP00000077967"/>
    <property type="gene ID" value="ENSDARG00000059805"/>
</dbReference>
<dbReference type="GeneID" id="767662"/>
<dbReference type="KEGG" id="dre:767662"/>
<dbReference type="AGR" id="ZFIN:ZDB-GENE-060929-320"/>
<dbReference type="CTD" id="767662"/>
<dbReference type="ZFIN" id="ZDB-GENE-060929-320">
    <property type="gene designation" value="slc25a38a"/>
</dbReference>
<dbReference type="eggNOG" id="KOG0766">
    <property type="taxonomic scope" value="Eukaryota"/>
</dbReference>
<dbReference type="HOGENOM" id="CLU_015166_0_3_1"/>
<dbReference type="InParanoid" id="Q08CI8"/>
<dbReference type="OMA" id="PWTQVLR"/>
<dbReference type="OrthoDB" id="1924968at2759"/>
<dbReference type="PhylomeDB" id="Q08CI8"/>
<dbReference type="TreeFam" id="TF332793"/>
<dbReference type="PRO" id="PR:Q08CI8"/>
<dbReference type="Proteomes" id="UP000000437">
    <property type="component" value="Chromosome 3"/>
</dbReference>
<dbReference type="Bgee" id="ENSDARG00000059805">
    <property type="expression patterns" value="Expressed in liver and 23 other cell types or tissues"/>
</dbReference>
<dbReference type="GO" id="GO:0005743">
    <property type="term" value="C:mitochondrial inner membrane"/>
    <property type="evidence" value="ECO:0000250"/>
    <property type="project" value="UniProtKB"/>
</dbReference>
<dbReference type="GO" id="GO:0005739">
    <property type="term" value="C:mitochondrion"/>
    <property type="evidence" value="ECO:0000318"/>
    <property type="project" value="GO_Central"/>
</dbReference>
<dbReference type="GO" id="GO:0015187">
    <property type="term" value="F:glycine transmembrane transporter activity"/>
    <property type="evidence" value="ECO:0000318"/>
    <property type="project" value="GO_Central"/>
</dbReference>
<dbReference type="GO" id="GO:0030218">
    <property type="term" value="P:erythrocyte differentiation"/>
    <property type="evidence" value="ECO:0000315"/>
    <property type="project" value="UniProtKB"/>
</dbReference>
<dbReference type="GO" id="GO:1904983">
    <property type="term" value="P:glycine import into mitochondrion"/>
    <property type="evidence" value="ECO:0000318"/>
    <property type="project" value="GO_Central"/>
</dbReference>
<dbReference type="GO" id="GO:0042541">
    <property type="term" value="P:hemoglobin biosynthetic process"/>
    <property type="evidence" value="ECO:0000316"/>
    <property type="project" value="ZFIN"/>
</dbReference>
<dbReference type="GO" id="GO:0020027">
    <property type="term" value="P:hemoglobin metabolic process"/>
    <property type="evidence" value="ECO:0000316"/>
    <property type="project" value="ZFIN"/>
</dbReference>
<dbReference type="FunFam" id="1.50.40.10:FF:000036">
    <property type="entry name" value="Mitochondrial glycine transporter B"/>
    <property type="match status" value="1"/>
</dbReference>
<dbReference type="Gene3D" id="1.50.40.10">
    <property type="entry name" value="Mitochondrial carrier domain"/>
    <property type="match status" value="1"/>
</dbReference>
<dbReference type="HAMAP" id="MF_03064">
    <property type="entry name" value="SLC25A38"/>
    <property type="match status" value="1"/>
</dbReference>
<dbReference type="InterPro" id="IPR030847">
    <property type="entry name" value="Hem25/SLC25A38"/>
</dbReference>
<dbReference type="InterPro" id="IPR002067">
    <property type="entry name" value="Mit_carrier"/>
</dbReference>
<dbReference type="InterPro" id="IPR018108">
    <property type="entry name" value="Mitochondrial_sb/sol_carrier"/>
</dbReference>
<dbReference type="InterPro" id="IPR023395">
    <property type="entry name" value="Mt_carrier_dom_sf"/>
</dbReference>
<dbReference type="PANTHER" id="PTHR46181">
    <property type="entry name" value="MITOCHONDRIAL GLYCINE TRANSPORTER"/>
    <property type="match status" value="1"/>
</dbReference>
<dbReference type="PANTHER" id="PTHR46181:SF1">
    <property type="entry name" value="MITOCHONDRIAL GLYCINE TRANSPORTER A"/>
    <property type="match status" value="1"/>
</dbReference>
<dbReference type="Pfam" id="PF00153">
    <property type="entry name" value="Mito_carr"/>
    <property type="match status" value="3"/>
</dbReference>
<dbReference type="PRINTS" id="PR00926">
    <property type="entry name" value="MITOCARRIER"/>
</dbReference>
<dbReference type="SUPFAM" id="SSF103506">
    <property type="entry name" value="Mitochondrial carrier"/>
    <property type="match status" value="1"/>
</dbReference>
<dbReference type="PROSITE" id="PS50920">
    <property type="entry name" value="SOLCAR"/>
    <property type="match status" value="3"/>
</dbReference>
<gene>
    <name type="primary">slc25a38a</name>
    <name type="ORF">zgc:153036</name>
</gene>
<accession>Q08CI8</accession>
<accession>F1QG50</accession>
<feature type="chain" id="PRO_0000291805" description="Mitochondrial glycine transporter A">
    <location>
        <begin position="1"/>
        <end position="287"/>
    </location>
</feature>
<feature type="transmembrane region" description="Helical; Name=1" evidence="3">
    <location>
        <begin position="13"/>
        <end position="38"/>
    </location>
</feature>
<feature type="transmembrane region" description="Helical; Name=2" evidence="3">
    <location>
        <begin position="72"/>
        <end position="98"/>
    </location>
</feature>
<feature type="transmembrane region" description="Helical; Name=3" evidence="3">
    <location>
        <begin position="110"/>
        <end position="135"/>
    </location>
</feature>
<feature type="transmembrane region" description="Helical; Name=4" evidence="3">
    <location>
        <begin position="163"/>
        <end position="186"/>
    </location>
</feature>
<feature type="transmembrane region" description="Helical; Name=5" evidence="3">
    <location>
        <begin position="202"/>
        <end position="228"/>
    </location>
</feature>
<feature type="transmembrane region" description="Helical; Name=6" evidence="3">
    <location>
        <begin position="257"/>
        <end position="275"/>
    </location>
</feature>
<feature type="repeat" description="Solcar 1" evidence="3">
    <location>
        <begin position="7"/>
        <end position="97"/>
    </location>
</feature>
<feature type="repeat" description="Solcar 2" evidence="3">
    <location>
        <begin position="104"/>
        <end position="188"/>
    </location>
</feature>
<feature type="repeat" description="Solcar 3" evidence="3">
    <location>
        <begin position="198"/>
        <end position="282"/>
    </location>
</feature>
<feature type="sequence conflict" description="In Ref. 2; AAI24223." evidence="6" ref="2">
    <original>Q</original>
    <variation>H</variation>
    <location>
        <position position="41"/>
    </location>
</feature>
<feature type="sequence conflict" description="In Ref. 2; AAI24223." evidence="6" ref="2">
    <original>R</original>
    <variation>H</variation>
    <location>
        <position position="97"/>
    </location>
</feature>
<feature type="sequence conflict" description="In Ref. 2; AAI24223." evidence="6" ref="2">
    <original>H</original>
    <variation>N</variation>
    <location>
        <position position="187"/>
    </location>
</feature>
<feature type="sequence conflict" description="In Ref. 2; AAI24223." evidence="6" ref="2">
    <original>I</original>
    <variation>M</variation>
    <location>
        <position position="283"/>
    </location>
</feature>